<sequence>MSAEDTPEADADAAEESEPETARAKLFGEWDITDIEYSDPSTERYITVTPIAHTMGRHADKQFKKSEISIVERLINRLMQTDENTGKKQLATSIVTEAFELVHERTDENPIQVLVSAVENSAPREETVRLKYGGISVPKAVDVAPQRRVDQALKFLAEGVYGGSFKTTTTAAEALAQQLIGAANDDVQTYAVNQKEEKERVAAAAR</sequence>
<evidence type="ECO:0000255" key="1">
    <source>
        <dbReference type="HAMAP-Rule" id="MF_00480"/>
    </source>
</evidence>
<evidence type="ECO:0000256" key="2">
    <source>
        <dbReference type="SAM" id="MobiDB-lite"/>
    </source>
</evidence>
<evidence type="ECO:0000269" key="3">
    <source>
    </source>
</evidence>
<evidence type="ECO:0000305" key="4"/>
<feature type="initiator methionine" description="Removed" evidence="3">
    <location>
        <position position="1"/>
    </location>
</feature>
<feature type="chain" id="PRO_0000124394" description="Small ribosomal subunit protein uS7">
    <location>
        <begin position="2"/>
        <end position="206"/>
    </location>
</feature>
<feature type="region of interest" description="Disordered" evidence="2">
    <location>
        <begin position="1"/>
        <end position="25"/>
    </location>
</feature>
<feature type="compositionally biased region" description="Acidic residues" evidence="2">
    <location>
        <begin position="1"/>
        <end position="19"/>
    </location>
</feature>
<feature type="modified residue" description="N-acetylserine" evidence="3">
    <location>
        <position position="2"/>
    </location>
</feature>
<organism>
    <name type="scientific">Haloarcula marismortui (strain ATCC 43049 / DSM 3752 / JCM 8966 / VKM B-1809)</name>
    <name type="common">Halobacterium marismortui</name>
    <dbReference type="NCBI Taxonomy" id="272569"/>
    <lineage>
        <taxon>Archaea</taxon>
        <taxon>Methanobacteriati</taxon>
        <taxon>Methanobacteriota</taxon>
        <taxon>Stenosarchaea group</taxon>
        <taxon>Halobacteria</taxon>
        <taxon>Halobacteriales</taxon>
        <taxon>Haloarculaceae</taxon>
        <taxon>Haloarcula</taxon>
    </lineage>
</organism>
<keyword id="KW-0007">Acetylation</keyword>
<keyword id="KW-0903">Direct protein sequencing</keyword>
<keyword id="KW-1185">Reference proteome</keyword>
<keyword id="KW-0687">Ribonucleoprotein</keyword>
<keyword id="KW-0689">Ribosomal protein</keyword>
<keyword id="KW-0694">RNA-binding</keyword>
<keyword id="KW-0699">rRNA-binding</keyword>
<dbReference type="EMBL" id="AY596297">
    <property type="protein sequence ID" value="AAV47234.1"/>
    <property type="molecule type" value="Genomic_DNA"/>
</dbReference>
<dbReference type="PIR" id="S33228">
    <property type="entry name" value="S33228"/>
</dbReference>
<dbReference type="RefSeq" id="WP_011224222.1">
    <property type="nucleotide sequence ID" value="NC_006396.1"/>
</dbReference>
<dbReference type="SMR" id="P32552"/>
<dbReference type="STRING" id="272569.rrnAC2423"/>
<dbReference type="iPTMnet" id="P32552"/>
<dbReference type="PaxDb" id="272569-rrnAC2423"/>
<dbReference type="EnsemblBacteria" id="AAV47234">
    <property type="protein sequence ID" value="AAV47234"/>
    <property type="gene ID" value="rrnAC2423"/>
</dbReference>
<dbReference type="GeneID" id="40153322"/>
<dbReference type="KEGG" id="hma:rrnAC2423"/>
<dbReference type="PATRIC" id="fig|272569.17.peg.3036"/>
<dbReference type="eggNOG" id="arCOG04254">
    <property type="taxonomic scope" value="Archaea"/>
</dbReference>
<dbReference type="HOGENOM" id="CLU_063975_0_0_2"/>
<dbReference type="Proteomes" id="UP000001169">
    <property type="component" value="Chromosome I"/>
</dbReference>
<dbReference type="GO" id="GO:0015935">
    <property type="term" value="C:small ribosomal subunit"/>
    <property type="evidence" value="ECO:0007669"/>
    <property type="project" value="InterPro"/>
</dbReference>
<dbReference type="GO" id="GO:0019843">
    <property type="term" value="F:rRNA binding"/>
    <property type="evidence" value="ECO:0007669"/>
    <property type="project" value="UniProtKB-UniRule"/>
</dbReference>
<dbReference type="GO" id="GO:0003735">
    <property type="term" value="F:structural constituent of ribosome"/>
    <property type="evidence" value="ECO:0007669"/>
    <property type="project" value="InterPro"/>
</dbReference>
<dbReference type="GO" id="GO:0006412">
    <property type="term" value="P:translation"/>
    <property type="evidence" value="ECO:0007669"/>
    <property type="project" value="UniProtKB-UniRule"/>
</dbReference>
<dbReference type="CDD" id="cd14867">
    <property type="entry name" value="uS7_Eukaryote"/>
    <property type="match status" value="1"/>
</dbReference>
<dbReference type="Gene3D" id="1.10.455.10">
    <property type="entry name" value="Ribosomal protein S7 domain"/>
    <property type="match status" value="1"/>
</dbReference>
<dbReference type="HAMAP" id="MF_00480_A">
    <property type="entry name" value="Ribosomal_uS7_A"/>
    <property type="match status" value="1"/>
</dbReference>
<dbReference type="InterPro" id="IPR000235">
    <property type="entry name" value="Ribosomal_uS7"/>
</dbReference>
<dbReference type="InterPro" id="IPR026018">
    <property type="entry name" value="Ribosomal_uS7_arc"/>
</dbReference>
<dbReference type="InterPro" id="IPR020606">
    <property type="entry name" value="Ribosomal_uS7_CS"/>
</dbReference>
<dbReference type="InterPro" id="IPR023798">
    <property type="entry name" value="Ribosomal_uS7_dom"/>
</dbReference>
<dbReference type="InterPro" id="IPR036823">
    <property type="entry name" value="Ribosomal_uS7_dom_sf"/>
</dbReference>
<dbReference type="InterPro" id="IPR005716">
    <property type="entry name" value="Ribosomal_uS7_euk/arc"/>
</dbReference>
<dbReference type="NCBIfam" id="NF003106">
    <property type="entry name" value="PRK04027.1"/>
    <property type="match status" value="1"/>
</dbReference>
<dbReference type="NCBIfam" id="TIGR01028">
    <property type="entry name" value="uS7_euk_arch"/>
    <property type="match status" value="1"/>
</dbReference>
<dbReference type="PANTHER" id="PTHR11205">
    <property type="entry name" value="RIBOSOMAL PROTEIN S7"/>
    <property type="match status" value="1"/>
</dbReference>
<dbReference type="Pfam" id="PF00177">
    <property type="entry name" value="Ribosomal_S7"/>
    <property type="match status" value="1"/>
</dbReference>
<dbReference type="PIRSF" id="PIRSF002122">
    <property type="entry name" value="RPS7p_RPS7a_RPS5e_RPS7o"/>
    <property type="match status" value="1"/>
</dbReference>
<dbReference type="SUPFAM" id="SSF47973">
    <property type="entry name" value="Ribosomal protein S7"/>
    <property type="match status" value="1"/>
</dbReference>
<dbReference type="PROSITE" id="PS00052">
    <property type="entry name" value="RIBOSOMAL_S7"/>
    <property type="match status" value="1"/>
</dbReference>
<accession>P32552</accession>
<accession>Q5UZR9</accession>
<name>RS7_HALMA</name>
<reference key="1">
    <citation type="journal article" date="2004" name="Genome Res.">
        <title>Genome sequence of Haloarcula marismortui: a halophilic archaeon from the Dead Sea.</title>
        <authorList>
            <person name="Baliga N.S."/>
            <person name="Bonneau R."/>
            <person name="Facciotti M.T."/>
            <person name="Pan M."/>
            <person name="Glusman G."/>
            <person name="Deutsch E.W."/>
            <person name="Shannon P."/>
            <person name="Chiu Y."/>
            <person name="Weng R.S."/>
            <person name="Gan R.R."/>
            <person name="Hung P."/>
            <person name="Date S.V."/>
            <person name="Marcotte E."/>
            <person name="Hood L."/>
            <person name="Ng W.V."/>
        </authorList>
    </citation>
    <scope>NUCLEOTIDE SEQUENCE [LARGE SCALE GENOMIC DNA]</scope>
    <source>
        <strain>ATCC 43049 / DSM 3752 / JCM 8966 / VKM B-1809</strain>
    </source>
</reference>
<reference key="2">
    <citation type="journal article" date="1993" name="Biol. Chem. Hoppe-Seyler">
        <title>N-terminal modification and amino-acid sequence of the ribosomal protein HmaS7 from Haloarcula marismortui and homology studies to other ribosomal proteins.</title>
        <authorList>
            <person name="Klussmann S."/>
            <person name="Franke P."/>
            <person name="Bergmann U."/>
            <person name="Kostka S."/>
            <person name="Wittmann-Liebold B."/>
        </authorList>
    </citation>
    <scope>PROTEIN SEQUENCE OF 2-206</scope>
    <scope>ACETYLATION AT SER-2</scope>
</reference>
<gene>
    <name evidence="1" type="primary">rps7</name>
    <name type="ordered locus">rrnAC2423</name>
</gene>
<comment type="function">
    <text evidence="1">One of the primary rRNA binding proteins, it binds directly to 16S rRNA where it nucleates assembly of the head domain of the 30S subunit. Is located at the subunit interface close to the decoding center.</text>
</comment>
<comment type="subunit">
    <text>Part of the 30S ribosomal subunit.</text>
</comment>
<comment type="similarity">
    <text evidence="1">Belongs to the universal ribosomal protein uS7 family.</text>
</comment>
<protein>
    <recommendedName>
        <fullName evidence="1">Small ribosomal subunit protein uS7</fullName>
    </recommendedName>
    <alternativeName>
        <fullName evidence="4">30S ribosomal protein S7</fullName>
    </alternativeName>
    <alternativeName>
        <fullName>HmaS7</fullName>
    </alternativeName>
</protein>
<proteinExistence type="evidence at protein level"/>